<dbReference type="PIR" id="A30515">
    <property type="entry name" value="A30515"/>
</dbReference>
<dbReference type="PIR" id="A30539">
    <property type="entry name" value="A30539"/>
</dbReference>
<dbReference type="PIR" id="A30556">
    <property type="entry name" value="A30556"/>
</dbReference>
<dbReference type="PIR" id="B30540">
    <property type="entry name" value="B30540"/>
</dbReference>
<dbReference type="PIR" id="B30556">
    <property type="entry name" value="B30556"/>
</dbReference>
<dbReference type="PIR" id="B93857">
    <property type="entry name" value="AVMS51"/>
</dbReference>
<dbReference type="PIR" id="D30539">
    <property type="entry name" value="D30539"/>
</dbReference>
<dbReference type="PIR" id="D30556">
    <property type="entry name" value="D30556"/>
</dbReference>
<dbReference type="PIR" id="E30539">
    <property type="entry name" value="E30539"/>
</dbReference>
<dbReference type="PIR" id="F30539">
    <property type="entry name" value="F30539"/>
</dbReference>
<dbReference type="PIR" id="G30539">
    <property type="entry name" value="G30539"/>
</dbReference>
<dbReference type="PIR" id="H30535">
    <property type="entry name" value="H30535"/>
</dbReference>
<dbReference type="PIR" id="H30539">
    <property type="entry name" value="H30539"/>
</dbReference>
<dbReference type="PIR" id="I30535">
    <property type="entry name" value="I30535"/>
</dbReference>
<dbReference type="PIR" id="I30538">
    <property type="entry name" value="I30538"/>
</dbReference>
<dbReference type="PIR" id="PL0017">
    <property type="entry name" value="PL0017"/>
</dbReference>
<dbReference type="PIR" id="PT0353">
    <property type="entry name" value="PT0353"/>
</dbReference>
<dbReference type="PIR" id="PT0354">
    <property type="entry name" value="PT0354"/>
</dbReference>
<dbReference type="FunCoup" id="P01788">
    <property type="interactions" value="554"/>
</dbReference>
<dbReference type="InParanoid" id="P01788"/>
<dbReference type="Proteomes" id="UP000000589">
    <property type="component" value="Unplaced"/>
</dbReference>
<dbReference type="RNAct" id="P01788">
    <property type="molecule type" value="protein"/>
</dbReference>
<dbReference type="GO" id="GO:0005576">
    <property type="term" value="C:extracellular region"/>
    <property type="evidence" value="ECO:0007669"/>
    <property type="project" value="UniProtKB-ARBA"/>
</dbReference>
<dbReference type="GO" id="GO:0019814">
    <property type="term" value="C:immunoglobulin complex"/>
    <property type="evidence" value="ECO:0007669"/>
    <property type="project" value="UniProtKB-KW"/>
</dbReference>
<dbReference type="GO" id="GO:0003823">
    <property type="term" value="F:antigen binding"/>
    <property type="evidence" value="ECO:0000318"/>
    <property type="project" value="GO_Central"/>
</dbReference>
<dbReference type="GO" id="GO:0016064">
    <property type="term" value="P:immunoglobulin mediated immune response"/>
    <property type="evidence" value="ECO:0000318"/>
    <property type="project" value="GO_Central"/>
</dbReference>
<dbReference type="CDD" id="cd04981">
    <property type="entry name" value="IgV_H"/>
    <property type="match status" value="1"/>
</dbReference>
<dbReference type="FunFam" id="2.60.40.10:FF:001372">
    <property type="entry name" value="Ig heavy chain V region M603"/>
    <property type="match status" value="1"/>
</dbReference>
<dbReference type="Gene3D" id="2.60.40.10">
    <property type="entry name" value="Immunoglobulins"/>
    <property type="match status" value="1"/>
</dbReference>
<dbReference type="InterPro" id="IPR007110">
    <property type="entry name" value="Ig-like_dom"/>
</dbReference>
<dbReference type="InterPro" id="IPR036179">
    <property type="entry name" value="Ig-like_dom_sf"/>
</dbReference>
<dbReference type="InterPro" id="IPR013783">
    <property type="entry name" value="Ig-like_fold"/>
</dbReference>
<dbReference type="InterPro" id="IPR003599">
    <property type="entry name" value="Ig_sub"/>
</dbReference>
<dbReference type="InterPro" id="IPR013106">
    <property type="entry name" value="Ig_V-set"/>
</dbReference>
<dbReference type="InterPro" id="IPR050199">
    <property type="entry name" value="IgHV"/>
</dbReference>
<dbReference type="PANTHER" id="PTHR23266">
    <property type="entry name" value="IMMUNOGLOBULIN HEAVY CHAIN"/>
    <property type="match status" value="1"/>
</dbReference>
<dbReference type="Pfam" id="PF07686">
    <property type="entry name" value="V-set"/>
    <property type="match status" value="1"/>
</dbReference>
<dbReference type="SMART" id="SM00409">
    <property type="entry name" value="IG"/>
    <property type="match status" value="1"/>
</dbReference>
<dbReference type="SMART" id="SM00406">
    <property type="entry name" value="IGv"/>
    <property type="match status" value="1"/>
</dbReference>
<dbReference type="SUPFAM" id="SSF48726">
    <property type="entry name" value="Immunoglobulin"/>
    <property type="match status" value="1"/>
</dbReference>
<dbReference type="PROSITE" id="PS50835">
    <property type="entry name" value="IG_LIKE"/>
    <property type="match status" value="1"/>
</dbReference>
<reference key="1">
    <citation type="thesis" date="1975" institute="California Institute of Technology" country="United States">
        <authorList>
            <person name="Barstad P."/>
        </authorList>
    </citation>
    <scope>PROTEIN SEQUENCE</scope>
</reference>
<comment type="miscellaneous">
    <text>This chain was isolated from a myeloma protein that binds phosphorylcholine.</text>
</comment>
<keyword id="KW-1064">Adaptive immunity</keyword>
<keyword id="KW-0903">Direct protein sequencing</keyword>
<keyword id="KW-0391">Immunity</keyword>
<keyword id="KW-1280">Immunoglobulin</keyword>
<keyword id="KW-1185">Reference proteome</keyword>
<name>HVM19_MOUSE</name>
<organism>
    <name type="scientific">Mus musculus</name>
    <name type="common">Mouse</name>
    <dbReference type="NCBI Taxonomy" id="10090"/>
    <lineage>
        <taxon>Eukaryota</taxon>
        <taxon>Metazoa</taxon>
        <taxon>Chordata</taxon>
        <taxon>Craniata</taxon>
        <taxon>Vertebrata</taxon>
        <taxon>Euteleostomi</taxon>
        <taxon>Mammalia</taxon>
        <taxon>Eutheria</taxon>
        <taxon>Euarchontoglires</taxon>
        <taxon>Glires</taxon>
        <taxon>Rodentia</taxon>
        <taxon>Myomorpha</taxon>
        <taxon>Muroidea</taxon>
        <taxon>Muridae</taxon>
        <taxon>Murinae</taxon>
        <taxon>Mus</taxon>
        <taxon>Mus</taxon>
    </lineage>
</organism>
<accession>P01788</accession>
<sequence length="123" mass="13805">EVKLVESGGGLVQPGGSLRLSCATSGFTFSDFYMEWVRQPPGKRLEWIAASRNKANDYTTEYSASVKGRFIVSRDTSQSILYLQMNALRAEDTAIYYCARDYYGBSYWYFDVWGAGTTVTVSS</sequence>
<proteinExistence type="evidence at protein level"/>
<feature type="chain" id="PRO_0000059874" description="Ig heavy chain V region H8">
    <location>
        <begin position="1"/>
        <end position="123" status="greater than"/>
    </location>
</feature>
<feature type="domain" description="Ig-like">
    <location>
        <begin position="1"/>
        <end position="114"/>
    </location>
</feature>
<feature type="non-terminal residue">
    <location>
        <position position="123"/>
    </location>
</feature>
<protein>
    <recommendedName>
        <fullName>Ig heavy chain V region H8</fullName>
    </recommendedName>
</protein>